<evidence type="ECO:0000255" key="1"/>
<evidence type="ECO:0000305" key="2"/>
<organism>
    <name type="scientific">Treponema pallidum (strain Nichols)</name>
    <dbReference type="NCBI Taxonomy" id="243276"/>
    <lineage>
        <taxon>Bacteria</taxon>
        <taxon>Pseudomonadati</taxon>
        <taxon>Spirochaetota</taxon>
        <taxon>Spirochaetia</taxon>
        <taxon>Spirochaetales</taxon>
        <taxon>Treponemataceae</taxon>
        <taxon>Treponema</taxon>
    </lineage>
</organism>
<proteinExistence type="inferred from homology"/>
<comment type="function">
    <text>Part of an ATP-driven transport system TP_0034/TP_0035/TP_0036 for a metal.</text>
</comment>
<comment type="subcellular location">
    <subcellularLocation>
        <location evidence="2">Cell inner membrane</location>
        <topology evidence="2">Multi-pass membrane protein</topology>
    </subcellularLocation>
</comment>
<comment type="similarity">
    <text evidence="2">Belongs to the ABC-3 integral membrane protein family.</text>
</comment>
<keyword id="KW-0997">Cell inner membrane</keyword>
<keyword id="KW-1003">Cell membrane</keyword>
<keyword id="KW-0472">Membrane</keyword>
<keyword id="KW-1185">Reference proteome</keyword>
<keyword id="KW-0812">Transmembrane</keyword>
<keyword id="KW-1133">Transmembrane helix</keyword>
<keyword id="KW-0813">Transport</keyword>
<feature type="chain" id="PRO_0000171175" description="Probable metal transport system membrane protein TP_0036">
    <location>
        <begin position="1"/>
        <end position="266"/>
    </location>
</feature>
<feature type="transmembrane region" description="Helical" evidence="1">
    <location>
        <begin position="10"/>
        <end position="30"/>
    </location>
</feature>
<feature type="transmembrane region" description="Helical" evidence="1">
    <location>
        <begin position="34"/>
        <end position="54"/>
    </location>
</feature>
<feature type="transmembrane region" description="Helical" evidence="1">
    <location>
        <begin position="56"/>
        <end position="76"/>
    </location>
</feature>
<feature type="transmembrane region" description="Helical" evidence="1">
    <location>
        <begin position="88"/>
        <end position="108"/>
    </location>
</feature>
<feature type="transmembrane region" description="Helical" evidence="1">
    <location>
        <begin position="120"/>
        <end position="140"/>
    </location>
</feature>
<feature type="transmembrane region" description="Helical" evidence="1">
    <location>
        <begin position="172"/>
        <end position="192"/>
    </location>
</feature>
<feature type="transmembrane region" description="Helical" evidence="1">
    <location>
        <begin position="211"/>
        <end position="231"/>
    </location>
</feature>
<feature type="transmembrane region" description="Helical" evidence="1">
    <location>
        <begin position="238"/>
        <end position="258"/>
    </location>
</feature>
<sequence>MLQYAFMRNAFVASFLIALLCPLVGMHLVLRRYALMGDALAHGSLAGVSIAVSCGIHPGWGSFFFTALVGVLIEFLRAFFKNHHDLILSIVLSLSVGIAVTLLSSGLIQADIDSYLFGSILVVSTRDLWIMLALSVFCVGTLALRYHQLLYLAFDEETARICGVAADGINYVASVVISATIAASIKITGILVLSSLMTVPVATALQLRVGFLLTLVAAFLFSMLDTALGLVFSYYLNVAPGGFTALVSVVVLMLVIALTQVGRART</sequence>
<gene>
    <name type="ordered locus">TP_0036</name>
</gene>
<dbReference type="EMBL" id="AE000520">
    <property type="protein sequence ID" value="AAC65031.1"/>
    <property type="molecule type" value="Genomic_DNA"/>
</dbReference>
<dbReference type="PIR" id="F71375">
    <property type="entry name" value="F71375"/>
</dbReference>
<dbReference type="RefSeq" id="WP_010881485.1">
    <property type="nucleotide sequence ID" value="NC_021490.2"/>
</dbReference>
<dbReference type="SMR" id="O83079"/>
<dbReference type="IntAct" id="O83079">
    <property type="interactions" value="2"/>
</dbReference>
<dbReference type="STRING" id="243276.TP_0036"/>
<dbReference type="EnsemblBacteria" id="AAC65031">
    <property type="protein sequence ID" value="AAC65031"/>
    <property type="gene ID" value="TP_0036"/>
</dbReference>
<dbReference type="KEGG" id="tpa:TP_0036"/>
<dbReference type="KEGG" id="tpw:TPANIC_0036"/>
<dbReference type="eggNOG" id="COG1108">
    <property type="taxonomic scope" value="Bacteria"/>
</dbReference>
<dbReference type="HOGENOM" id="CLU_028808_3_1_12"/>
<dbReference type="OrthoDB" id="9798540at2"/>
<dbReference type="Proteomes" id="UP000000811">
    <property type="component" value="Chromosome"/>
</dbReference>
<dbReference type="GO" id="GO:0043190">
    <property type="term" value="C:ATP-binding cassette (ABC) transporter complex"/>
    <property type="evidence" value="ECO:0007669"/>
    <property type="project" value="InterPro"/>
</dbReference>
<dbReference type="GO" id="GO:0010043">
    <property type="term" value="P:response to zinc ion"/>
    <property type="evidence" value="ECO:0007669"/>
    <property type="project" value="TreeGrafter"/>
</dbReference>
<dbReference type="GO" id="GO:0055085">
    <property type="term" value="P:transmembrane transport"/>
    <property type="evidence" value="ECO:0007669"/>
    <property type="project" value="InterPro"/>
</dbReference>
<dbReference type="CDD" id="cd06550">
    <property type="entry name" value="TM_ABC_iron-siderophores_like"/>
    <property type="match status" value="1"/>
</dbReference>
<dbReference type="Gene3D" id="1.10.3470.10">
    <property type="entry name" value="ABC transporter involved in vitamin B12 uptake, BtuC"/>
    <property type="match status" value="1"/>
</dbReference>
<dbReference type="InterPro" id="IPR037294">
    <property type="entry name" value="ABC_BtuC-like"/>
</dbReference>
<dbReference type="InterPro" id="IPR001626">
    <property type="entry name" value="ABC_TroCD"/>
</dbReference>
<dbReference type="PANTHER" id="PTHR30477">
    <property type="entry name" value="ABC-TRANSPORTER METAL-BINDING PROTEIN"/>
    <property type="match status" value="1"/>
</dbReference>
<dbReference type="PANTHER" id="PTHR30477:SF0">
    <property type="entry name" value="METAL TRANSPORT SYSTEM MEMBRANE PROTEIN TM_0125-RELATED"/>
    <property type="match status" value="1"/>
</dbReference>
<dbReference type="Pfam" id="PF00950">
    <property type="entry name" value="ABC-3"/>
    <property type="match status" value="1"/>
</dbReference>
<dbReference type="SUPFAM" id="SSF81345">
    <property type="entry name" value="ABC transporter involved in vitamin B12 uptake, BtuC"/>
    <property type="match status" value="1"/>
</dbReference>
<reference key="1">
    <citation type="journal article" date="1998" name="Science">
        <title>Complete genome sequence of Treponema pallidum, the syphilis spirochete.</title>
        <authorList>
            <person name="Fraser C.M."/>
            <person name="Norris S.J."/>
            <person name="Weinstock G.M."/>
            <person name="White O."/>
            <person name="Sutton G.G."/>
            <person name="Dodson R.J."/>
            <person name="Gwinn M.L."/>
            <person name="Hickey E.K."/>
            <person name="Clayton R.A."/>
            <person name="Ketchum K.A."/>
            <person name="Sodergren E."/>
            <person name="Hardham J.M."/>
            <person name="McLeod M.P."/>
            <person name="Salzberg S.L."/>
            <person name="Peterson J.D."/>
            <person name="Khalak H.G."/>
            <person name="Richardson D.L."/>
            <person name="Howell J.K."/>
            <person name="Chidambaram M."/>
            <person name="Utterback T.R."/>
            <person name="McDonald L.A."/>
            <person name="Artiach P."/>
            <person name="Bowman C."/>
            <person name="Cotton M.D."/>
            <person name="Fujii C."/>
            <person name="Garland S.A."/>
            <person name="Hatch B."/>
            <person name="Horst K."/>
            <person name="Roberts K.M."/>
            <person name="Sandusky M."/>
            <person name="Weidman J.F."/>
            <person name="Smith H.O."/>
            <person name="Venter J.C."/>
        </authorList>
    </citation>
    <scope>NUCLEOTIDE SEQUENCE [LARGE SCALE GENOMIC DNA]</scope>
    <source>
        <strain>Nichols</strain>
    </source>
</reference>
<protein>
    <recommendedName>
        <fullName>Probable metal transport system membrane protein TP_0036</fullName>
    </recommendedName>
</protein>
<accession>O83079</accession>
<name>Y036_TREPA</name>